<keyword id="KW-1185">Reference proteome</keyword>
<keyword id="KW-0687">Ribonucleoprotein</keyword>
<keyword id="KW-0689">Ribosomal protein</keyword>
<name>RL17_BRUA2</name>
<organism>
    <name type="scientific">Brucella abortus (strain 2308)</name>
    <dbReference type="NCBI Taxonomy" id="359391"/>
    <lineage>
        <taxon>Bacteria</taxon>
        <taxon>Pseudomonadati</taxon>
        <taxon>Pseudomonadota</taxon>
        <taxon>Alphaproteobacteria</taxon>
        <taxon>Hyphomicrobiales</taxon>
        <taxon>Brucellaceae</taxon>
        <taxon>Brucella/Ochrobactrum group</taxon>
        <taxon>Brucella</taxon>
    </lineage>
</organism>
<sequence length="142" mass="15636">MRHGNGYRKLNRTASHRKAMFANMAASLIEHEQIVTTLPKAKEIRPIVEKLVTLGKRGDLHARRQAISAIRDVRLVAKLFDTLAARYATRNGGYIRIMKAGFRAGDNAPLAVVEFVERDVDAKGKADRARVEAEAAAEADAA</sequence>
<dbReference type="EMBL" id="AM040264">
    <property type="protein sequence ID" value="CAJ11186.1"/>
    <property type="molecule type" value="Genomic_DNA"/>
</dbReference>
<dbReference type="RefSeq" id="WP_002964337.1">
    <property type="nucleotide sequence ID" value="NZ_KN046823.1"/>
</dbReference>
<dbReference type="SMR" id="Q2YRU1"/>
<dbReference type="STRING" id="359391.BAB1_1230"/>
<dbReference type="GeneID" id="93016464"/>
<dbReference type="KEGG" id="bmf:BAB1_1230"/>
<dbReference type="PATRIC" id="fig|359391.11.peg.129"/>
<dbReference type="HOGENOM" id="CLU_074407_2_0_5"/>
<dbReference type="PhylomeDB" id="Q2YRU1"/>
<dbReference type="Proteomes" id="UP000002719">
    <property type="component" value="Chromosome I"/>
</dbReference>
<dbReference type="GO" id="GO:0022625">
    <property type="term" value="C:cytosolic large ribosomal subunit"/>
    <property type="evidence" value="ECO:0007669"/>
    <property type="project" value="TreeGrafter"/>
</dbReference>
<dbReference type="GO" id="GO:0003735">
    <property type="term" value="F:structural constituent of ribosome"/>
    <property type="evidence" value="ECO:0007669"/>
    <property type="project" value="InterPro"/>
</dbReference>
<dbReference type="GO" id="GO:0006412">
    <property type="term" value="P:translation"/>
    <property type="evidence" value="ECO:0007669"/>
    <property type="project" value="UniProtKB-UniRule"/>
</dbReference>
<dbReference type="FunFam" id="3.90.1030.10:FF:000001">
    <property type="entry name" value="50S ribosomal protein L17"/>
    <property type="match status" value="1"/>
</dbReference>
<dbReference type="Gene3D" id="3.90.1030.10">
    <property type="entry name" value="Ribosomal protein L17"/>
    <property type="match status" value="1"/>
</dbReference>
<dbReference type="HAMAP" id="MF_01368">
    <property type="entry name" value="Ribosomal_bL17"/>
    <property type="match status" value="1"/>
</dbReference>
<dbReference type="InterPro" id="IPR000456">
    <property type="entry name" value="Ribosomal_bL17"/>
</dbReference>
<dbReference type="InterPro" id="IPR047859">
    <property type="entry name" value="Ribosomal_bL17_CS"/>
</dbReference>
<dbReference type="InterPro" id="IPR036373">
    <property type="entry name" value="Ribosomal_bL17_sf"/>
</dbReference>
<dbReference type="NCBIfam" id="TIGR00059">
    <property type="entry name" value="L17"/>
    <property type="match status" value="1"/>
</dbReference>
<dbReference type="PANTHER" id="PTHR14413:SF16">
    <property type="entry name" value="LARGE RIBOSOMAL SUBUNIT PROTEIN BL17M"/>
    <property type="match status" value="1"/>
</dbReference>
<dbReference type="PANTHER" id="PTHR14413">
    <property type="entry name" value="RIBOSOMAL PROTEIN L17"/>
    <property type="match status" value="1"/>
</dbReference>
<dbReference type="Pfam" id="PF01196">
    <property type="entry name" value="Ribosomal_L17"/>
    <property type="match status" value="1"/>
</dbReference>
<dbReference type="SUPFAM" id="SSF64263">
    <property type="entry name" value="Prokaryotic ribosomal protein L17"/>
    <property type="match status" value="1"/>
</dbReference>
<dbReference type="PROSITE" id="PS01167">
    <property type="entry name" value="RIBOSOMAL_L17"/>
    <property type="match status" value="1"/>
</dbReference>
<protein>
    <recommendedName>
        <fullName evidence="1">Large ribosomal subunit protein bL17</fullName>
    </recommendedName>
    <alternativeName>
        <fullName evidence="2">50S ribosomal protein L17</fullName>
    </alternativeName>
</protein>
<comment type="subunit">
    <text evidence="1">Part of the 50S ribosomal subunit. Contacts protein L32.</text>
</comment>
<comment type="similarity">
    <text evidence="1">Belongs to the bacterial ribosomal protein bL17 family.</text>
</comment>
<reference key="1">
    <citation type="journal article" date="2005" name="Infect. Immun.">
        <title>Whole-genome analyses of speciation events in pathogenic Brucellae.</title>
        <authorList>
            <person name="Chain P.S."/>
            <person name="Comerci D.J."/>
            <person name="Tolmasky M.E."/>
            <person name="Larimer F.W."/>
            <person name="Malfatti S.A."/>
            <person name="Vergez L.M."/>
            <person name="Aguero F."/>
            <person name="Land M.L."/>
            <person name="Ugalde R.A."/>
            <person name="Garcia E."/>
        </authorList>
    </citation>
    <scope>NUCLEOTIDE SEQUENCE [LARGE SCALE GENOMIC DNA]</scope>
    <source>
        <strain>2308</strain>
    </source>
</reference>
<feature type="chain" id="PRO_0000267840" description="Large ribosomal subunit protein bL17">
    <location>
        <begin position="1"/>
        <end position="142"/>
    </location>
</feature>
<evidence type="ECO:0000255" key="1">
    <source>
        <dbReference type="HAMAP-Rule" id="MF_01368"/>
    </source>
</evidence>
<evidence type="ECO:0000305" key="2"/>
<gene>
    <name evidence="1" type="primary">rplQ</name>
    <name type="ordered locus">BAB1_1230</name>
</gene>
<proteinExistence type="inferred from homology"/>
<accession>Q2YRU1</accession>